<accession>P50093</accession>
<proteinExistence type="evidence at protein level"/>
<protein>
    <recommendedName>
        <fullName>Mitochondrial prohibitin complex protein 2</fullName>
        <shortName>Prohibitin-2</shortName>
    </recommendedName>
</protein>
<keyword id="KW-0175">Coiled coil</keyword>
<keyword id="KW-0472">Membrane</keyword>
<keyword id="KW-0496">Mitochondrion</keyword>
<keyword id="KW-0999">Mitochondrion inner membrane</keyword>
<keyword id="KW-1185">Reference proteome</keyword>
<keyword id="KW-0735">Signal-anchor</keyword>
<keyword id="KW-0812">Transmembrane</keyword>
<keyword id="KW-1133">Transmembrane helix</keyword>
<comment type="function">
    <text evidence="2 3">PHB proteins are essential during embryonic development and are required for somatic and germline differentiation in the larval gonad. A deficiency in PHB proteins results in altered mitochondrial biogenesis in body wall muscle cells (PubMed:12794069). Required for clearance of paternal mitochondria after embryonic fertilization (PubMed:28017329).</text>
</comment>
<comment type="subunit">
    <text evidence="2">High molecular weight complex that consist of phb-1 and phb-2.</text>
</comment>
<comment type="subcellular location">
    <subcellularLocation>
        <location evidence="2">Mitochondrion inner membrane</location>
        <topology evidence="2">Single-pass type II membrane protein</topology>
        <orientation evidence="2">Intermembrane side</orientation>
    </subcellularLocation>
</comment>
<comment type="similarity">
    <text evidence="4">Belongs to the prohibitin family.</text>
</comment>
<feature type="chain" id="PRO_0000213887" description="Mitochondrial prohibitin complex protein 2">
    <location>
        <begin position="1"/>
        <end position="294"/>
    </location>
</feature>
<feature type="transmembrane region" description="Helical; Signal-anchor for type II membrane protein" evidence="1">
    <location>
        <begin position="20"/>
        <end position="42"/>
    </location>
</feature>
<feature type="coiled-coil region" evidence="1">
    <location>
        <begin position="212"/>
        <end position="237"/>
    </location>
</feature>
<sequence>MAKQGQEAMKKAIQNARGAGVGLGLVAAAGAAVYGVAQSMFTVEAGHRAIMFNRIGGLSTDLYKEGLHFRIPWFQYPIIYDIRARPNQIRSPTGSKDLQMVNIGLRVLSRPNPEHLVHIYRTLGQNWEERVLPSICNEVLKGVVAKFNASQLITQRQQVSMLVRKTLIERALDFNIILDDVSLTELAFSPQYSAAVEAKQVAAQEAQRATFYVERAKQQKQEKIVQAEGEAESAKLLGEAMKNDPGFLKLRKIRAAQKIARIVSESGNKTYLPTGGLMLNIADTDYLNVTDKRR</sequence>
<name>PHB2_CAEEL</name>
<dbReference type="EMBL" id="FO080720">
    <property type="protein sequence ID" value="CCD66149.1"/>
    <property type="molecule type" value="Genomic_DNA"/>
</dbReference>
<dbReference type="PIR" id="H88175">
    <property type="entry name" value="H88175"/>
</dbReference>
<dbReference type="RefSeq" id="NP_495250.2">
    <property type="nucleotide sequence ID" value="NM_062849.5"/>
</dbReference>
<dbReference type="SMR" id="P50093"/>
<dbReference type="BioGRID" id="39374">
    <property type="interactions" value="21"/>
</dbReference>
<dbReference type="ComplexPortal" id="CPX-4114">
    <property type="entry name" value="Prohibitin complex"/>
</dbReference>
<dbReference type="DIP" id="DIP-26193N"/>
<dbReference type="FunCoup" id="P50093">
    <property type="interactions" value="2521"/>
</dbReference>
<dbReference type="STRING" id="6239.T24H7.1.2"/>
<dbReference type="PaxDb" id="6239-T24H7.1"/>
<dbReference type="PeptideAtlas" id="P50093"/>
<dbReference type="EnsemblMetazoa" id="T24H7.1.1">
    <property type="protein sequence ID" value="T24H7.1.1"/>
    <property type="gene ID" value="WBGene00004015"/>
</dbReference>
<dbReference type="GeneID" id="174034"/>
<dbReference type="KEGG" id="cel:CELE_T24H7.1"/>
<dbReference type="UCSC" id="T24H7.1">
    <property type="organism name" value="c. elegans"/>
</dbReference>
<dbReference type="AGR" id="WB:WBGene00004015"/>
<dbReference type="CTD" id="174034"/>
<dbReference type="WormBase" id="T24H7.1">
    <property type="protein sequence ID" value="CE40718"/>
    <property type="gene ID" value="WBGene00004015"/>
    <property type="gene designation" value="phb-2"/>
</dbReference>
<dbReference type="eggNOG" id="KOG3090">
    <property type="taxonomic scope" value="Eukaryota"/>
</dbReference>
<dbReference type="GeneTree" id="ENSGT00950000183070"/>
<dbReference type="HOGENOM" id="CLU_047969_0_2_1"/>
<dbReference type="InParanoid" id="P50093"/>
<dbReference type="OMA" id="NEGTHFQ"/>
<dbReference type="OrthoDB" id="275637at2759"/>
<dbReference type="PhylomeDB" id="P50093"/>
<dbReference type="Reactome" id="R-CEL-8949664">
    <property type="pathway name" value="Processing of SMDT1"/>
</dbReference>
<dbReference type="PRO" id="PR:P50093"/>
<dbReference type="Proteomes" id="UP000001940">
    <property type="component" value="Chromosome II"/>
</dbReference>
<dbReference type="Bgee" id="WBGene00004015">
    <property type="expression patterns" value="Expressed in germ line (C elegans) and 4 other cell types or tissues"/>
</dbReference>
<dbReference type="GO" id="GO:0009986">
    <property type="term" value="C:cell surface"/>
    <property type="evidence" value="ECO:0000250"/>
    <property type="project" value="UniProtKB"/>
</dbReference>
<dbReference type="GO" id="GO:0005743">
    <property type="term" value="C:mitochondrial inner membrane"/>
    <property type="evidence" value="ECO:0000314"/>
    <property type="project" value="ComplexPortal"/>
</dbReference>
<dbReference type="GO" id="GO:0031966">
    <property type="term" value="C:mitochondrial membrane"/>
    <property type="evidence" value="ECO:0000314"/>
    <property type="project" value="WormBase"/>
</dbReference>
<dbReference type="GO" id="GO:0035632">
    <property type="term" value="C:mitochondrial prohibitin complex"/>
    <property type="evidence" value="ECO:0000314"/>
    <property type="project" value="ComplexPortal"/>
</dbReference>
<dbReference type="GO" id="GO:0005739">
    <property type="term" value="C:mitochondrion"/>
    <property type="evidence" value="ECO:0007005"/>
    <property type="project" value="WormBase"/>
</dbReference>
<dbReference type="GO" id="GO:0005886">
    <property type="term" value="C:plasma membrane"/>
    <property type="evidence" value="ECO:0000250"/>
    <property type="project" value="UniProtKB"/>
</dbReference>
<dbReference type="GO" id="GO:0042803">
    <property type="term" value="F:protein homodimerization activity"/>
    <property type="evidence" value="ECO:0000250"/>
    <property type="project" value="UniProtKB"/>
</dbReference>
<dbReference type="GO" id="GO:0030421">
    <property type="term" value="P:defecation"/>
    <property type="evidence" value="ECO:0000315"/>
    <property type="project" value="WormBase"/>
</dbReference>
<dbReference type="GO" id="GO:0009792">
    <property type="term" value="P:embryo development ending in birth or egg hatching"/>
    <property type="evidence" value="ECO:0000315"/>
    <property type="project" value="WormBase"/>
</dbReference>
<dbReference type="GO" id="GO:0008406">
    <property type="term" value="P:gonad development"/>
    <property type="evidence" value="ECO:0000315"/>
    <property type="project" value="WormBase"/>
</dbReference>
<dbReference type="GO" id="GO:0007005">
    <property type="term" value="P:mitochondrion organization"/>
    <property type="evidence" value="ECO:0000315"/>
    <property type="project" value="WormBase"/>
</dbReference>
<dbReference type="GO" id="GO:0000423">
    <property type="term" value="P:mitophagy"/>
    <property type="evidence" value="ECO:0000314"/>
    <property type="project" value="UniProtKB"/>
</dbReference>
<dbReference type="GO" id="GO:0048477">
    <property type="term" value="P:oogenesis"/>
    <property type="evidence" value="ECO:0000315"/>
    <property type="project" value="WormBase"/>
</dbReference>
<dbReference type="GO" id="GO:0040018">
    <property type="term" value="P:positive regulation of multicellular organism growth"/>
    <property type="evidence" value="ECO:0000315"/>
    <property type="project" value="WormBase"/>
</dbReference>
<dbReference type="GO" id="GO:0050821">
    <property type="term" value="P:protein stabilization"/>
    <property type="evidence" value="ECO:0000303"/>
    <property type="project" value="ComplexPortal"/>
</dbReference>
<dbReference type="GO" id="GO:0043051">
    <property type="term" value="P:regulation of nematode pharyngeal pumping"/>
    <property type="evidence" value="ECO:0000315"/>
    <property type="project" value="WormBase"/>
</dbReference>
<dbReference type="GO" id="GO:0002082">
    <property type="term" value="P:regulation of oxidative phosphorylation"/>
    <property type="evidence" value="ECO:0000315"/>
    <property type="project" value="WormBase"/>
</dbReference>
<dbReference type="GO" id="GO:0006979">
    <property type="term" value="P:response to oxidative stress"/>
    <property type="evidence" value="ECO:0000315"/>
    <property type="project" value="WormBase"/>
</dbReference>
<dbReference type="GO" id="GO:0007283">
    <property type="term" value="P:spermatogenesis"/>
    <property type="evidence" value="ECO:0000315"/>
    <property type="project" value="WormBase"/>
</dbReference>
<dbReference type="CDD" id="cd03401">
    <property type="entry name" value="SPFH_prohibitin"/>
    <property type="match status" value="1"/>
</dbReference>
<dbReference type="FunFam" id="3.30.479.30:FF:000001">
    <property type="entry name" value="Prohibitin 2"/>
    <property type="match status" value="1"/>
</dbReference>
<dbReference type="Gene3D" id="3.30.479.30">
    <property type="entry name" value="Band 7 domain"/>
    <property type="match status" value="1"/>
</dbReference>
<dbReference type="InterPro" id="IPR001107">
    <property type="entry name" value="Band_7"/>
</dbReference>
<dbReference type="InterPro" id="IPR036013">
    <property type="entry name" value="Band_7/SPFH_dom_sf"/>
</dbReference>
<dbReference type="InterPro" id="IPR000163">
    <property type="entry name" value="Prohibitin"/>
</dbReference>
<dbReference type="PANTHER" id="PTHR23222">
    <property type="entry name" value="PROHIBITIN"/>
    <property type="match status" value="1"/>
</dbReference>
<dbReference type="PANTHER" id="PTHR23222:SF1">
    <property type="entry name" value="PROHIBITIN-2"/>
    <property type="match status" value="1"/>
</dbReference>
<dbReference type="Pfam" id="PF01145">
    <property type="entry name" value="Band_7"/>
    <property type="match status" value="1"/>
</dbReference>
<dbReference type="PRINTS" id="PR00679">
    <property type="entry name" value="PROHIBITIN"/>
</dbReference>
<dbReference type="SMART" id="SM00244">
    <property type="entry name" value="PHB"/>
    <property type="match status" value="1"/>
</dbReference>
<dbReference type="SUPFAM" id="SSF117892">
    <property type="entry name" value="Band 7/SPFH domain"/>
    <property type="match status" value="1"/>
</dbReference>
<evidence type="ECO:0000255" key="1"/>
<evidence type="ECO:0000269" key="2">
    <source>
    </source>
</evidence>
<evidence type="ECO:0000269" key="3">
    <source>
    </source>
</evidence>
<evidence type="ECO:0000305" key="4"/>
<organism>
    <name type="scientific">Caenorhabditis elegans</name>
    <dbReference type="NCBI Taxonomy" id="6239"/>
    <lineage>
        <taxon>Eukaryota</taxon>
        <taxon>Metazoa</taxon>
        <taxon>Ecdysozoa</taxon>
        <taxon>Nematoda</taxon>
        <taxon>Chromadorea</taxon>
        <taxon>Rhabditida</taxon>
        <taxon>Rhabditina</taxon>
        <taxon>Rhabditomorpha</taxon>
        <taxon>Rhabditoidea</taxon>
        <taxon>Rhabditidae</taxon>
        <taxon>Peloderinae</taxon>
        <taxon>Caenorhabditis</taxon>
    </lineage>
</organism>
<reference key="1">
    <citation type="journal article" date="1998" name="Science">
        <title>Genome sequence of the nematode C. elegans: a platform for investigating biology.</title>
        <authorList>
            <consortium name="The C. elegans sequencing consortium"/>
        </authorList>
    </citation>
    <scope>NUCLEOTIDE SEQUENCE [LARGE SCALE GENOMIC DNA]</scope>
    <source>
        <strain>Bristol N2</strain>
    </source>
</reference>
<reference key="2">
    <citation type="journal article" date="2003" name="J. Biol. Chem.">
        <title>The mitochondrial prohibitin complex is essential for embryonic viability and germline function in Caenorhabditis elegans.</title>
        <authorList>
            <person name="Artal-Sanz M."/>
            <person name="Tsang W.Y."/>
            <person name="Willems E.M."/>
            <person name="Grivell L.A."/>
            <person name="Lemire B.D."/>
            <person name="van der Spek H."/>
            <person name="Nijtmans L.G."/>
            <person name="Sanz M.A."/>
        </authorList>
    </citation>
    <scope>FUNCTION</scope>
    <scope>SUBUNIT</scope>
    <scope>SUBCELLULAR LOCATION</scope>
</reference>
<reference key="3">
    <citation type="journal article" date="2017" name="Cell">
        <title>Prohibitin 2 Is an Inner Mitochondrial Membrane Mitophagy Receptor.</title>
        <authorList>
            <person name="Wei Y."/>
            <person name="Chiang W.C."/>
            <person name="Sumpter R. Jr."/>
            <person name="Mishra P."/>
            <person name="Levine B."/>
        </authorList>
    </citation>
    <scope>FUNCTION</scope>
</reference>
<gene>
    <name type="primary">phb-2</name>
    <name type="ORF">T24H7.1</name>
</gene>